<gene>
    <name evidence="1" type="primary">thiC</name>
    <name type="ordered locus">ACICU_00274</name>
</gene>
<accession>B2I1W2</accession>
<dbReference type="EC" id="4.1.99.17" evidence="1"/>
<dbReference type="EMBL" id="CP000863">
    <property type="protein sequence ID" value="ACC55586.1"/>
    <property type="molecule type" value="Genomic_DNA"/>
</dbReference>
<dbReference type="RefSeq" id="WP_001072861.1">
    <property type="nucleotide sequence ID" value="NZ_CP031380.1"/>
</dbReference>
<dbReference type="SMR" id="B2I1W2"/>
<dbReference type="GeneID" id="92892250"/>
<dbReference type="KEGG" id="abc:ACICU_00274"/>
<dbReference type="HOGENOM" id="CLU_013181_2_1_6"/>
<dbReference type="UniPathway" id="UPA00060"/>
<dbReference type="Proteomes" id="UP000008839">
    <property type="component" value="Chromosome"/>
</dbReference>
<dbReference type="GO" id="GO:0005829">
    <property type="term" value="C:cytosol"/>
    <property type="evidence" value="ECO:0007669"/>
    <property type="project" value="TreeGrafter"/>
</dbReference>
<dbReference type="GO" id="GO:0051539">
    <property type="term" value="F:4 iron, 4 sulfur cluster binding"/>
    <property type="evidence" value="ECO:0007669"/>
    <property type="project" value="UniProtKB-KW"/>
</dbReference>
<dbReference type="GO" id="GO:0016830">
    <property type="term" value="F:carbon-carbon lyase activity"/>
    <property type="evidence" value="ECO:0007669"/>
    <property type="project" value="InterPro"/>
</dbReference>
<dbReference type="GO" id="GO:0008270">
    <property type="term" value="F:zinc ion binding"/>
    <property type="evidence" value="ECO:0007669"/>
    <property type="project" value="UniProtKB-UniRule"/>
</dbReference>
<dbReference type="GO" id="GO:0009228">
    <property type="term" value="P:thiamine biosynthetic process"/>
    <property type="evidence" value="ECO:0007669"/>
    <property type="project" value="UniProtKB-KW"/>
</dbReference>
<dbReference type="GO" id="GO:0009229">
    <property type="term" value="P:thiamine diphosphate biosynthetic process"/>
    <property type="evidence" value="ECO:0007669"/>
    <property type="project" value="UniProtKB-UniRule"/>
</dbReference>
<dbReference type="FunFam" id="3.20.20.540:FF:000001">
    <property type="entry name" value="Phosphomethylpyrimidine synthase"/>
    <property type="match status" value="1"/>
</dbReference>
<dbReference type="Gene3D" id="6.10.250.620">
    <property type="match status" value="1"/>
</dbReference>
<dbReference type="Gene3D" id="3.20.20.540">
    <property type="entry name" value="Radical SAM ThiC family, central domain"/>
    <property type="match status" value="1"/>
</dbReference>
<dbReference type="HAMAP" id="MF_00089">
    <property type="entry name" value="ThiC"/>
    <property type="match status" value="1"/>
</dbReference>
<dbReference type="InterPro" id="IPR037509">
    <property type="entry name" value="ThiC"/>
</dbReference>
<dbReference type="InterPro" id="IPR025747">
    <property type="entry name" value="ThiC-associated_dom"/>
</dbReference>
<dbReference type="InterPro" id="IPR038521">
    <property type="entry name" value="ThiC/Bza_core_dom"/>
</dbReference>
<dbReference type="InterPro" id="IPR002817">
    <property type="entry name" value="ThiC/BzaA/B"/>
</dbReference>
<dbReference type="NCBIfam" id="NF006763">
    <property type="entry name" value="PRK09284.1"/>
    <property type="match status" value="1"/>
</dbReference>
<dbReference type="NCBIfam" id="NF009895">
    <property type="entry name" value="PRK13352.1"/>
    <property type="match status" value="1"/>
</dbReference>
<dbReference type="NCBIfam" id="TIGR00190">
    <property type="entry name" value="thiC"/>
    <property type="match status" value="1"/>
</dbReference>
<dbReference type="PANTHER" id="PTHR30557:SF1">
    <property type="entry name" value="PHOSPHOMETHYLPYRIMIDINE SYNTHASE, CHLOROPLASTIC"/>
    <property type="match status" value="1"/>
</dbReference>
<dbReference type="PANTHER" id="PTHR30557">
    <property type="entry name" value="THIAMINE BIOSYNTHESIS PROTEIN THIC"/>
    <property type="match status" value="1"/>
</dbReference>
<dbReference type="Pfam" id="PF13667">
    <property type="entry name" value="ThiC-associated"/>
    <property type="match status" value="1"/>
</dbReference>
<dbReference type="Pfam" id="PF01964">
    <property type="entry name" value="ThiC_Rad_SAM"/>
    <property type="match status" value="1"/>
</dbReference>
<dbReference type="SFLD" id="SFLDF00407">
    <property type="entry name" value="phosphomethylpyrimidine_syntha"/>
    <property type="match status" value="1"/>
</dbReference>
<dbReference type="SFLD" id="SFLDG01114">
    <property type="entry name" value="phosphomethylpyrimidine_syntha"/>
    <property type="match status" value="1"/>
</dbReference>
<dbReference type="SFLD" id="SFLDS00113">
    <property type="entry name" value="Radical_SAM_Phosphomethylpyrim"/>
    <property type="match status" value="1"/>
</dbReference>
<sequence>MNQLTNLSSAEISAQHEQDAKDLTRILPASKKVYIEGSRPDIQVPMREISLTDTPTGLGGEHNPPIMVYDTSGVYTDPNVQIDLNKGLPSVRQKWIEERNDTDVLSGLTSKFGQERLKDIRTADIRFAHIQNPRRAKAGKNVTQMHYAKQGIITPEMEYIAIRENQRQREAVDMRQHPGQNFGAKNLKEITPEFVRQEVAEGRAIIPANINHPELEPMIIGRNFLVKINANIGNSALGSSIDEEVAKMTWATRWGADTIMDLSTGKNIHETREWIIRNSPVPIGTVPIYQALEKVDGVAENLTWEIFKDTLIEQAEQGVDYFTIHAGVLLRYVPLTANRLTGIVSRGGSIMAQWCLAHHEENFLYTHFDEICEIMKAYDVSFSLGDGLRPGCIQDANDEAQFSELKTLGELTHRAWEHDVQVMIEGPGHVPMHMIKENMDLQLEVCKEAPFYTLGPLTTDIAPGYDHITSAIGAAMIGWYGTAMLCYVTPKEHLGLPNKKDVKDGIITYKIAAHAADLAKGHPGAQVRDNALSKARFEFRWDDQFNLSLDPDTARSMHDETLPKEAHKSAHFCSMCGPKFCSMKITQNVRDYANNLTNSDSEVEEGLKAMKEVYQEQGQKLYHKV</sequence>
<proteinExistence type="inferred from homology"/>
<organism>
    <name type="scientific">Acinetobacter baumannii (strain ACICU)</name>
    <dbReference type="NCBI Taxonomy" id="405416"/>
    <lineage>
        <taxon>Bacteria</taxon>
        <taxon>Pseudomonadati</taxon>
        <taxon>Pseudomonadota</taxon>
        <taxon>Gammaproteobacteria</taxon>
        <taxon>Moraxellales</taxon>
        <taxon>Moraxellaceae</taxon>
        <taxon>Acinetobacter</taxon>
        <taxon>Acinetobacter calcoaceticus/baumannii complex</taxon>
    </lineage>
</organism>
<evidence type="ECO:0000255" key="1">
    <source>
        <dbReference type="HAMAP-Rule" id="MF_00089"/>
    </source>
</evidence>
<comment type="function">
    <text evidence="1">Catalyzes the synthesis of the hydroxymethylpyrimidine phosphate (HMP-P) moiety of thiamine from aminoimidazole ribotide (AIR) in a radical S-adenosyl-L-methionine (SAM)-dependent reaction.</text>
</comment>
<comment type="catalytic activity">
    <reaction evidence="1">
        <text>5-amino-1-(5-phospho-beta-D-ribosyl)imidazole + S-adenosyl-L-methionine = 4-amino-2-methyl-5-(phosphooxymethyl)pyrimidine + CO + 5'-deoxyadenosine + formate + L-methionine + 3 H(+)</text>
        <dbReference type="Rhea" id="RHEA:24840"/>
        <dbReference type="ChEBI" id="CHEBI:15378"/>
        <dbReference type="ChEBI" id="CHEBI:15740"/>
        <dbReference type="ChEBI" id="CHEBI:17245"/>
        <dbReference type="ChEBI" id="CHEBI:17319"/>
        <dbReference type="ChEBI" id="CHEBI:57844"/>
        <dbReference type="ChEBI" id="CHEBI:58354"/>
        <dbReference type="ChEBI" id="CHEBI:59789"/>
        <dbReference type="ChEBI" id="CHEBI:137981"/>
        <dbReference type="EC" id="4.1.99.17"/>
    </reaction>
</comment>
<comment type="cofactor">
    <cofactor evidence="1">
        <name>[4Fe-4S] cluster</name>
        <dbReference type="ChEBI" id="CHEBI:49883"/>
    </cofactor>
    <text evidence="1">Binds 1 [4Fe-4S] cluster per subunit. The cluster is coordinated with 3 cysteines and an exchangeable S-adenosyl-L-methionine.</text>
</comment>
<comment type="pathway">
    <text evidence="1">Cofactor biosynthesis; thiamine diphosphate biosynthesis.</text>
</comment>
<comment type="subunit">
    <text evidence="1">Homodimer.</text>
</comment>
<comment type="similarity">
    <text evidence="1">Belongs to the ThiC family.</text>
</comment>
<protein>
    <recommendedName>
        <fullName evidence="1">Phosphomethylpyrimidine synthase</fullName>
        <ecNumber evidence="1">4.1.99.17</ecNumber>
    </recommendedName>
    <alternativeName>
        <fullName evidence="1">Hydroxymethylpyrimidine phosphate synthase</fullName>
        <shortName evidence="1">HMP-P synthase</shortName>
        <shortName evidence="1">HMP-phosphate synthase</shortName>
        <shortName evidence="1">HMPP synthase</shortName>
    </alternativeName>
    <alternativeName>
        <fullName evidence="1">Thiamine biosynthesis protein ThiC</fullName>
    </alternativeName>
</protein>
<keyword id="KW-0004">4Fe-4S</keyword>
<keyword id="KW-0408">Iron</keyword>
<keyword id="KW-0411">Iron-sulfur</keyword>
<keyword id="KW-0456">Lyase</keyword>
<keyword id="KW-0479">Metal-binding</keyword>
<keyword id="KW-0949">S-adenosyl-L-methionine</keyword>
<keyword id="KW-0784">Thiamine biosynthesis</keyword>
<keyword id="KW-0862">Zinc</keyword>
<name>THIC_ACIBC</name>
<feature type="chain" id="PRO_1000093182" description="Phosphomethylpyrimidine synthase">
    <location>
        <begin position="1"/>
        <end position="625"/>
    </location>
</feature>
<feature type="binding site" evidence="1">
    <location>
        <position position="231"/>
    </location>
    <ligand>
        <name>substrate</name>
    </ligand>
</feature>
<feature type="binding site" evidence="1">
    <location>
        <position position="260"/>
    </location>
    <ligand>
        <name>substrate</name>
    </ligand>
</feature>
<feature type="binding site" evidence="1">
    <location>
        <position position="289"/>
    </location>
    <ligand>
        <name>substrate</name>
    </ligand>
</feature>
<feature type="binding site" evidence="1">
    <location>
        <position position="325"/>
    </location>
    <ligand>
        <name>substrate</name>
    </ligand>
</feature>
<feature type="binding site" evidence="1">
    <location>
        <begin position="345"/>
        <end position="347"/>
    </location>
    <ligand>
        <name>substrate</name>
    </ligand>
</feature>
<feature type="binding site" evidence="1">
    <location>
        <begin position="386"/>
        <end position="389"/>
    </location>
    <ligand>
        <name>substrate</name>
    </ligand>
</feature>
<feature type="binding site" evidence="1">
    <location>
        <position position="425"/>
    </location>
    <ligand>
        <name>substrate</name>
    </ligand>
</feature>
<feature type="binding site" evidence="1">
    <location>
        <position position="429"/>
    </location>
    <ligand>
        <name>Zn(2+)</name>
        <dbReference type="ChEBI" id="CHEBI:29105"/>
    </ligand>
</feature>
<feature type="binding site" evidence="1">
    <location>
        <position position="452"/>
    </location>
    <ligand>
        <name>substrate</name>
    </ligand>
</feature>
<feature type="binding site" evidence="1">
    <location>
        <position position="493"/>
    </location>
    <ligand>
        <name>Zn(2+)</name>
        <dbReference type="ChEBI" id="CHEBI:29105"/>
    </ligand>
</feature>
<feature type="binding site" evidence="1">
    <location>
        <position position="573"/>
    </location>
    <ligand>
        <name>[4Fe-4S] cluster</name>
        <dbReference type="ChEBI" id="CHEBI:49883"/>
        <note>4Fe-4S-S-AdoMet</note>
    </ligand>
</feature>
<feature type="binding site" evidence="1">
    <location>
        <position position="576"/>
    </location>
    <ligand>
        <name>[4Fe-4S] cluster</name>
        <dbReference type="ChEBI" id="CHEBI:49883"/>
        <note>4Fe-4S-S-AdoMet</note>
    </ligand>
</feature>
<feature type="binding site" evidence="1">
    <location>
        <position position="581"/>
    </location>
    <ligand>
        <name>[4Fe-4S] cluster</name>
        <dbReference type="ChEBI" id="CHEBI:49883"/>
        <note>4Fe-4S-S-AdoMet</note>
    </ligand>
</feature>
<reference key="1">
    <citation type="journal article" date="2008" name="Antimicrob. Agents Chemother.">
        <title>Whole-genome pyrosequencing of an epidemic multidrug-resistant Acinetobacter baumannii strain belonging to the European clone II group.</title>
        <authorList>
            <person name="Iacono M."/>
            <person name="Villa L."/>
            <person name="Fortini D."/>
            <person name="Bordoni R."/>
            <person name="Imperi F."/>
            <person name="Bonnal R.J."/>
            <person name="Sicheritz-Ponten T."/>
            <person name="De Bellis G."/>
            <person name="Visca P."/>
            <person name="Cassone A."/>
            <person name="Carattoli A."/>
        </authorList>
    </citation>
    <scope>NUCLEOTIDE SEQUENCE [LARGE SCALE GENOMIC DNA]</scope>
    <source>
        <strain>ACICU</strain>
    </source>
</reference>